<reference key="1">
    <citation type="journal article" date="2010" name="Nature">
        <title>The sequence and de novo assembly of the giant panda genome.</title>
        <authorList>
            <person name="Li R."/>
            <person name="Fan W."/>
            <person name="Tian G."/>
            <person name="Zhu H."/>
            <person name="He L."/>
            <person name="Cai J."/>
            <person name="Huang Q."/>
            <person name="Cai Q."/>
            <person name="Li B."/>
            <person name="Bai Y."/>
            <person name="Zhang Z."/>
            <person name="Zhang Y."/>
            <person name="Wang W."/>
            <person name="Li J."/>
            <person name="Wei F."/>
            <person name="Li H."/>
            <person name="Jian M."/>
            <person name="Li J."/>
            <person name="Zhang Z."/>
            <person name="Nielsen R."/>
            <person name="Li D."/>
            <person name="Gu W."/>
            <person name="Yang Z."/>
            <person name="Xuan Z."/>
            <person name="Ryder O.A."/>
            <person name="Leung F.C."/>
            <person name="Zhou Y."/>
            <person name="Cao J."/>
            <person name="Sun X."/>
            <person name="Fu Y."/>
            <person name="Fang X."/>
            <person name="Guo X."/>
            <person name="Wang B."/>
            <person name="Hou R."/>
            <person name="Shen F."/>
            <person name="Mu B."/>
            <person name="Ni P."/>
            <person name="Lin R."/>
            <person name="Qian W."/>
            <person name="Wang G."/>
            <person name="Yu C."/>
            <person name="Nie W."/>
            <person name="Wang J."/>
            <person name="Wu Z."/>
            <person name="Liang H."/>
            <person name="Min J."/>
            <person name="Wu Q."/>
            <person name="Cheng S."/>
            <person name="Ruan J."/>
            <person name="Wang M."/>
            <person name="Shi Z."/>
            <person name="Wen M."/>
            <person name="Liu B."/>
            <person name="Ren X."/>
            <person name="Zheng H."/>
            <person name="Dong D."/>
            <person name="Cook K."/>
            <person name="Shan G."/>
            <person name="Zhang H."/>
            <person name="Kosiol C."/>
            <person name="Xie X."/>
            <person name="Lu Z."/>
            <person name="Zheng H."/>
            <person name="Li Y."/>
            <person name="Steiner C.C."/>
            <person name="Lam T.T."/>
            <person name="Lin S."/>
            <person name="Zhang Q."/>
            <person name="Li G."/>
            <person name="Tian J."/>
            <person name="Gong T."/>
            <person name="Liu H."/>
            <person name="Zhang D."/>
            <person name="Fang L."/>
            <person name="Ye C."/>
            <person name="Zhang J."/>
            <person name="Hu W."/>
            <person name="Xu A."/>
            <person name="Ren Y."/>
            <person name="Zhang G."/>
            <person name="Bruford M.W."/>
            <person name="Li Q."/>
            <person name="Ma L."/>
            <person name="Guo Y."/>
            <person name="An N."/>
            <person name="Hu Y."/>
            <person name="Zheng Y."/>
            <person name="Shi Y."/>
            <person name="Li Z."/>
            <person name="Liu Q."/>
            <person name="Chen Y."/>
            <person name="Zhao J."/>
            <person name="Qu N."/>
            <person name="Zhao S."/>
            <person name="Tian F."/>
            <person name="Wang X."/>
            <person name="Wang H."/>
            <person name="Xu L."/>
            <person name="Liu X."/>
            <person name="Vinar T."/>
            <person name="Wang Y."/>
            <person name="Lam T.W."/>
            <person name="Yiu S.M."/>
            <person name="Liu S."/>
            <person name="Zhang H."/>
            <person name="Li D."/>
            <person name="Huang Y."/>
            <person name="Wang X."/>
            <person name="Yang G."/>
            <person name="Jiang Z."/>
            <person name="Wang J."/>
            <person name="Qin N."/>
            <person name="Li L."/>
            <person name="Li J."/>
            <person name="Bolund L."/>
            <person name="Kristiansen K."/>
            <person name="Wong G.K."/>
            <person name="Olson M."/>
            <person name="Zhang X."/>
            <person name="Li S."/>
            <person name="Yang H."/>
            <person name="Wang J."/>
            <person name="Wang J."/>
        </authorList>
    </citation>
    <scope>NUCLEOTIDE SEQUENCE [LARGE SCALE GENOMIC DNA]</scope>
</reference>
<dbReference type="EMBL" id="GL193270">
    <property type="protein sequence ID" value="EFB29584.1"/>
    <property type="molecule type" value="Genomic_DNA"/>
</dbReference>
<dbReference type="RefSeq" id="XP_002925444.1">
    <property type="nucleotide sequence ID" value="XM_002925398.3"/>
</dbReference>
<dbReference type="RefSeq" id="XP_019661681.1">
    <property type="nucleotide sequence ID" value="XM_019806122.1"/>
</dbReference>
<dbReference type="RefSeq" id="XP_019661682.1">
    <property type="nucleotide sequence ID" value="XM_019806123.1"/>
</dbReference>
<dbReference type="RefSeq" id="XP_019661683.1">
    <property type="nucleotide sequence ID" value="XM_019806124.1"/>
</dbReference>
<dbReference type="RefSeq" id="XP_019661684.1">
    <property type="nucleotide sequence ID" value="XM_019806125.1"/>
</dbReference>
<dbReference type="RefSeq" id="XP_019661685.1">
    <property type="nucleotide sequence ID" value="XM_019806126.1"/>
</dbReference>
<dbReference type="RefSeq" id="XP_019661686.1">
    <property type="nucleotide sequence ID" value="XM_019806127.1"/>
</dbReference>
<dbReference type="SMR" id="D2HSA6"/>
<dbReference type="STRING" id="9646.ENSAMEP00000014844"/>
<dbReference type="GlyCosmos" id="D2HSA6">
    <property type="glycosylation" value="2 sites, No reported glycans"/>
</dbReference>
<dbReference type="eggNOG" id="KOG4255">
    <property type="taxonomic scope" value="Eukaryota"/>
</dbReference>
<dbReference type="InParanoid" id="D2HSA6"/>
<dbReference type="Proteomes" id="UP000008912">
    <property type="component" value="Unassembled WGS sequence"/>
</dbReference>
<dbReference type="GO" id="GO:0005886">
    <property type="term" value="C:plasma membrane"/>
    <property type="evidence" value="ECO:0000250"/>
    <property type="project" value="UniProtKB"/>
</dbReference>
<dbReference type="GO" id="GO:0032217">
    <property type="term" value="F:riboflavin transmembrane transporter activity"/>
    <property type="evidence" value="ECO:0000250"/>
    <property type="project" value="UniProtKB"/>
</dbReference>
<dbReference type="GO" id="GO:0032218">
    <property type="term" value="P:riboflavin transport"/>
    <property type="evidence" value="ECO:0000250"/>
    <property type="project" value="UniProtKB"/>
</dbReference>
<dbReference type="GO" id="GO:0007605">
    <property type="term" value="P:sensory perception of sound"/>
    <property type="evidence" value="ECO:0000250"/>
    <property type="project" value="UniProtKB"/>
</dbReference>
<dbReference type="InterPro" id="IPR009357">
    <property type="entry name" value="Riboflavin_transptr"/>
</dbReference>
<dbReference type="PANTHER" id="PTHR12929">
    <property type="entry name" value="SOLUTE CARRIER FAMILY 52"/>
    <property type="match status" value="1"/>
</dbReference>
<dbReference type="PANTHER" id="PTHR12929:SF4">
    <property type="entry name" value="SOLUTE CARRIER FAMILY 52, RIBOFLAVIN TRANSPORTER, MEMBER 3"/>
    <property type="match status" value="1"/>
</dbReference>
<dbReference type="Pfam" id="PF06237">
    <property type="entry name" value="SLC52_ribofla_tr"/>
    <property type="match status" value="1"/>
</dbReference>
<organism>
    <name type="scientific">Ailuropoda melanoleuca</name>
    <name type="common">Giant panda</name>
    <dbReference type="NCBI Taxonomy" id="9646"/>
    <lineage>
        <taxon>Eukaryota</taxon>
        <taxon>Metazoa</taxon>
        <taxon>Chordata</taxon>
        <taxon>Craniata</taxon>
        <taxon>Vertebrata</taxon>
        <taxon>Euteleostomi</taxon>
        <taxon>Mammalia</taxon>
        <taxon>Eutheria</taxon>
        <taxon>Laurasiatheria</taxon>
        <taxon>Carnivora</taxon>
        <taxon>Caniformia</taxon>
        <taxon>Ursidae</taxon>
        <taxon>Ailuropoda</taxon>
    </lineage>
</organism>
<accession>D2HSA6</accession>
<proteinExistence type="inferred from homology"/>
<name>S52A3_AILME</name>
<evidence type="ECO:0000250" key="1">
    <source>
        <dbReference type="UniProtKB" id="Q4FZU9"/>
    </source>
</evidence>
<evidence type="ECO:0000250" key="2">
    <source>
        <dbReference type="UniProtKB" id="Q9NQ40"/>
    </source>
</evidence>
<evidence type="ECO:0000255" key="3"/>
<evidence type="ECO:0000256" key="4">
    <source>
        <dbReference type="SAM" id="MobiDB-lite"/>
    </source>
</evidence>
<evidence type="ECO:0000305" key="5"/>
<gene>
    <name type="primary">SLC52A3</name>
    <name type="synonym">RFT2</name>
    <name type="ORF">PANDA_014962</name>
</gene>
<keyword id="KW-1003">Cell membrane</keyword>
<keyword id="KW-0325">Glycoprotein</keyword>
<keyword id="KW-0472">Membrane</keyword>
<keyword id="KW-0597">Phosphoprotein</keyword>
<keyword id="KW-1185">Reference proteome</keyword>
<keyword id="KW-0812">Transmembrane</keyword>
<keyword id="KW-1133">Transmembrane helix</keyword>
<keyword id="KW-0813">Transport</keyword>
<feature type="chain" id="PRO_0000399790" description="Solute carrier family 52, riboflavin transporter, member 3">
    <location>
        <begin position="1"/>
        <end position="469"/>
    </location>
</feature>
<feature type="topological domain" description="Cytoplasmic" evidence="5">
    <location>
        <begin position="1"/>
        <end position="6"/>
    </location>
</feature>
<feature type="transmembrane region" description="Helical" evidence="3">
    <location>
        <begin position="7"/>
        <end position="27"/>
    </location>
</feature>
<feature type="topological domain" description="Extracellular" evidence="5">
    <location>
        <begin position="28"/>
        <end position="43"/>
    </location>
</feature>
<feature type="transmembrane region" description="Helical" evidence="3">
    <location>
        <begin position="44"/>
        <end position="64"/>
    </location>
</feature>
<feature type="topological domain" description="Cytoplasmic" evidence="5">
    <location>
        <begin position="65"/>
        <end position="71"/>
    </location>
</feature>
<feature type="transmembrane region" description="Helical" evidence="3">
    <location>
        <begin position="72"/>
        <end position="92"/>
    </location>
</feature>
<feature type="topological domain" description="Extracellular" evidence="5">
    <location>
        <begin position="93"/>
        <end position="105"/>
    </location>
</feature>
<feature type="transmembrane region" description="Helical" evidence="3">
    <location>
        <begin position="106"/>
        <end position="126"/>
    </location>
</feature>
<feature type="topological domain" description="Cytoplasmic" evidence="5">
    <location>
        <begin position="127"/>
        <end position="137"/>
    </location>
</feature>
<feature type="transmembrane region" description="Helical" evidence="3">
    <location>
        <begin position="138"/>
        <end position="158"/>
    </location>
</feature>
<feature type="topological domain" description="Extracellular" evidence="5">
    <location>
        <begin position="159"/>
        <end position="220"/>
    </location>
</feature>
<feature type="transmembrane region" description="Helical" evidence="3">
    <location>
        <begin position="221"/>
        <end position="241"/>
    </location>
</feature>
<feature type="topological domain" description="Cytoplasmic" evidence="5">
    <location>
        <begin position="242"/>
        <end position="297"/>
    </location>
</feature>
<feature type="transmembrane region" description="Helical" evidence="3">
    <location>
        <begin position="298"/>
        <end position="318"/>
    </location>
</feature>
<feature type="topological domain" description="Extracellular" evidence="5">
    <location>
        <begin position="319"/>
        <end position="335"/>
    </location>
</feature>
<feature type="transmembrane region" description="Helical" evidence="3">
    <location>
        <begin position="336"/>
        <end position="356"/>
    </location>
</feature>
<feature type="topological domain" description="Cytoplasmic" evidence="5">
    <location>
        <begin position="357"/>
        <end position="361"/>
    </location>
</feature>
<feature type="transmembrane region" description="Helical" evidence="3">
    <location>
        <begin position="362"/>
        <end position="382"/>
    </location>
</feature>
<feature type="topological domain" description="Extracellular" evidence="5">
    <location>
        <begin position="383"/>
        <end position="396"/>
    </location>
</feature>
<feature type="transmembrane region" description="Helical" evidence="3">
    <location>
        <begin position="397"/>
        <end position="417"/>
    </location>
</feature>
<feature type="topological domain" description="Cytoplasmic" evidence="5">
    <location>
        <begin position="418"/>
        <end position="427"/>
    </location>
</feature>
<feature type="transmembrane region" description="Helical" evidence="3">
    <location>
        <begin position="428"/>
        <end position="448"/>
    </location>
</feature>
<feature type="topological domain" description="Extracellular" evidence="5">
    <location>
        <begin position="449"/>
        <end position="469"/>
    </location>
</feature>
<feature type="region of interest" description="Disordered" evidence="4">
    <location>
        <begin position="266"/>
        <end position="290"/>
    </location>
</feature>
<feature type="modified residue" description="Phosphoserine" evidence="1">
    <location>
        <position position="251"/>
    </location>
</feature>
<feature type="glycosylation site" description="N-linked (GlcNAc...) asparagine" evidence="3">
    <location>
        <position position="94"/>
    </location>
</feature>
<feature type="glycosylation site" description="N-linked (GlcNAc...) asparagine" evidence="3">
    <location>
        <position position="168"/>
    </location>
</feature>
<protein>
    <recommendedName>
        <fullName>Solute carrier family 52, riboflavin transporter, member 3</fullName>
    </recommendedName>
    <alternativeName>
        <fullName>Riboflavin transporter 2</fullName>
        <shortName>RFT2</shortName>
    </alternativeName>
</protein>
<sequence length="469" mass="50502">MALLTHLLVCTFGMGSWVAINGLWVELPLLVTELPEGWYLPSYLTMVIQLANIGPLLVTLLHHFQPSCLSEVPIIFTVLAVGTVACALFAFLWNVTSWVLDGRHSIAFMVLTFFLALVDCTSSVTFLPFMSRLPACYLTTFFVGEGLSSLLPALVALAQGSGLTTCVNVTQPPDTTPSTATTGKTVFLQGANSTLGTDLTGTTRSAIHLESRYLPANFSPLVFFLLLSFMMACCLAAFFLLQRQPRPRESSIEDLLTSQVTLHSIRPREGDDLGPPDPGPSSKAQGLPEEKTASDHPAHLAFIYVLVAFVNALTNGVLPSVQTYSCLSYGPVAYHLSATLSSMANPLACFLSMFLPHRSLPFLGVLTVLGTGFGAYNMAMAVMSPCPLMQGHWAGEILIVASWVLFIGCLSYVKVMLGVILRDRSRSALVWCGAAVQLGSLLGALLMFPLVNVLRLFSSADFCSLQCSA</sequence>
<comment type="function">
    <text evidence="2">Plasma membrane transporter mediating the uptake by cells of the water soluble vitamin B2/riboflavin that plays a key role in biochemical oxidation-reduction reactions of the carbohydrate, lipid, and amino acid metabolism.</text>
</comment>
<comment type="catalytic activity">
    <reaction evidence="2">
        <text>riboflavin(in) = riboflavin(out)</text>
        <dbReference type="Rhea" id="RHEA:35015"/>
        <dbReference type="ChEBI" id="CHEBI:57986"/>
    </reaction>
</comment>
<comment type="subcellular location">
    <subcellularLocation>
        <location evidence="2">Cell membrane</location>
        <topology evidence="3">Multi-pass membrane protein</topology>
    </subcellularLocation>
</comment>
<comment type="similarity">
    <text evidence="5">Belongs to the riboflavin transporter family.</text>
</comment>